<gene>
    <name evidence="2" type="primary">ADA2</name>
    <name type="synonym">CECR1</name>
</gene>
<organism>
    <name type="scientific">Sus scrofa</name>
    <name type="common">Pig</name>
    <dbReference type="NCBI Taxonomy" id="9823"/>
    <lineage>
        <taxon>Eukaryota</taxon>
        <taxon>Metazoa</taxon>
        <taxon>Chordata</taxon>
        <taxon>Craniata</taxon>
        <taxon>Vertebrata</taxon>
        <taxon>Euteleostomi</taxon>
        <taxon>Mammalia</taxon>
        <taxon>Eutheria</taxon>
        <taxon>Laurasiatheria</taxon>
        <taxon>Artiodactyla</taxon>
        <taxon>Suina</taxon>
        <taxon>Suidae</taxon>
        <taxon>Sus</taxon>
    </lineage>
</organism>
<comment type="function">
    <text evidence="1">Adenosine deaminase that may contribute to the degradation of extracellular adenosine, a signaling molecule that controls a variety of cellular responses. Requires elevated adenosine levels for optimal enzyme activity. Binds to cell surfaces via proteoglycans and may play a role in the regulation of cell proliferation and differentiation, independently of its enzyme activity (By similarity).</text>
</comment>
<comment type="catalytic activity">
    <reaction>
        <text>adenosine + H2O + H(+) = inosine + NH4(+)</text>
        <dbReference type="Rhea" id="RHEA:24408"/>
        <dbReference type="ChEBI" id="CHEBI:15377"/>
        <dbReference type="ChEBI" id="CHEBI:15378"/>
        <dbReference type="ChEBI" id="CHEBI:16335"/>
        <dbReference type="ChEBI" id="CHEBI:17596"/>
        <dbReference type="ChEBI" id="CHEBI:28938"/>
        <dbReference type="EC" id="3.5.4.4"/>
    </reaction>
</comment>
<comment type="cofactor">
    <cofactor evidence="1">
        <name>Zn(2+)</name>
        <dbReference type="ChEBI" id="CHEBI:29105"/>
    </cofactor>
    <text evidence="1">Binds 1 zinc ion per subunit.</text>
</comment>
<comment type="subunit">
    <text evidence="1">Homodimer. Interacts with adenosine receptors. Binds heparin (By similarity).</text>
</comment>
<comment type="subcellular location">
    <subcellularLocation>
        <location evidence="1">Secreted</location>
    </subcellularLocation>
</comment>
<comment type="domain">
    <text evidence="1">The PRB domain is involved in receptor binding, and may be responsible for the cytokine-like growth factor activity due to it's sharing of several structural properties with chemokines.</text>
</comment>
<comment type="domain">
    <text evidence="1">High-affinity binding to heparin/glycosaminoclycan (GAG) is mediated by a large, highly positively charged surface at the interface of dimer's subunits involving approximately residues 25-40, 386-393, and 419-425.</text>
</comment>
<comment type="similarity">
    <text evidence="4">Belongs to the metallo-dependent hydrolases superfamily. Adenosine and AMP deaminases family. ADGF subfamily.</text>
</comment>
<sequence length="510" mass="58190">MSGWPVLPALLLAVAMSSFHSATSRDEERNRLLMREKMMQVGGQLVLQEEEERANGRLQALKEAEMQEAKRTGIFPPSLHFFQAKGLMEKSAVFNILKKMPKGAALHVHDFGMVSMDWLVKNATYRPYCYFCLTPKGATQFKFAHPPPPTPKQEECSEWVLLEKFRKGLPNVTEFDNSLLRTFTLMTENPQETYANQDMVWKKFKTIFFAISGLVNYAPVFRDFIFLGLEEFYQDQVLYLELRAMLYPVYELNGMVHSREWSVRTYEEVARTFAKTHPGFIGIKLIYSDHRSKDVSLIKESVQRAMELRAKFPQMVAGFDLVGREDTGHSLYDYKEALMIPASRGVKLPYFFHAGETDWQGTSADRNLLDALILNSTRIGHGFALSKHPAVWADAWRKDIPLEVCPISNQVLKLVSDLRNHPAAVLMATGYPMVISSDDPAAFGAKGLSYDFYEAFMGLGGLTADLRTLKQLAMNSIRYSALSETEKKVAMETWEERWHRFVAELTRGPK</sequence>
<proteinExistence type="evidence at transcript level"/>
<keyword id="KW-1015">Disulfide bond</keyword>
<keyword id="KW-0325">Glycoprotein</keyword>
<keyword id="KW-0358">Heparin-binding</keyword>
<keyword id="KW-0378">Hydrolase</keyword>
<keyword id="KW-0479">Metal-binding</keyword>
<keyword id="KW-1185">Reference proteome</keyword>
<keyword id="KW-0964">Secreted</keyword>
<keyword id="KW-0732">Signal</keyword>
<keyword id="KW-0862">Zinc</keyword>
<dbReference type="EC" id="3.5.4.4" evidence="2"/>
<dbReference type="EMBL" id="AF384216">
    <property type="protein sequence ID" value="AAL40921.1"/>
    <property type="molecule type" value="mRNA"/>
</dbReference>
<dbReference type="RefSeq" id="NP_999181.1">
    <property type="nucleotide sequence ID" value="NM_214016.2"/>
</dbReference>
<dbReference type="SMR" id="P58780"/>
<dbReference type="FunCoup" id="P58780">
    <property type="interactions" value="82"/>
</dbReference>
<dbReference type="STRING" id="9823.ENSSSCP00000054648"/>
<dbReference type="GlyCosmos" id="P58780">
    <property type="glycosylation" value="3 sites, No reported glycans"/>
</dbReference>
<dbReference type="GlyGen" id="P58780">
    <property type="glycosylation" value="4 sites"/>
</dbReference>
<dbReference type="PaxDb" id="9823-ENSSSCP00000027144"/>
<dbReference type="Ensembl" id="ENSSSCT00130021612">
    <property type="protein sequence ID" value="ENSSSCP00130014696"/>
    <property type="gene ID" value="ENSSSCG00130011365"/>
</dbReference>
<dbReference type="GeneID" id="397079"/>
<dbReference type="KEGG" id="ssc:397079"/>
<dbReference type="CTD" id="51816"/>
<dbReference type="eggNOG" id="KOG1097">
    <property type="taxonomic scope" value="Eukaryota"/>
</dbReference>
<dbReference type="InParanoid" id="P58780"/>
<dbReference type="OrthoDB" id="7202371at2759"/>
<dbReference type="BRENDA" id="3.5.4.4">
    <property type="organism ID" value="6170"/>
</dbReference>
<dbReference type="Proteomes" id="UP000008227">
    <property type="component" value="Unplaced"/>
</dbReference>
<dbReference type="Proteomes" id="UP000314985">
    <property type="component" value="Unplaced"/>
</dbReference>
<dbReference type="Proteomes" id="UP000694570">
    <property type="component" value="Unplaced"/>
</dbReference>
<dbReference type="Proteomes" id="UP000694571">
    <property type="component" value="Unplaced"/>
</dbReference>
<dbReference type="Proteomes" id="UP000694720">
    <property type="component" value="Unplaced"/>
</dbReference>
<dbReference type="Proteomes" id="UP000694722">
    <property type="component" value="Unplaced"/>
</dbReference>
<dbReference type="Proteomes" id="UP000694723">
    <property type="component" value="Unplaced"/>
</dbReference>
<dbReference type="Proteomes" id="UP000694724">
    <property type="component" value="Unplaced"/>
</dbReference>
<dbReference type="Proteomes" id="UP000694725">
    <property type="component" value="Unplaced"/>
</dbReference>
<dbReference type="Proteomes" id="UP000694726">
    <property type="component" value="Unplaced"/>
</dbReference>
<dbReference type="Proteomes" id="UP000694727">
    <property type="component" value="Unplaced"/>
</dbReference>
<dbReference type="Proteomes" id="UP000694728">
    <property type="component" value="Unplaced"/>
</dbReference>
<dbReference type="GO" id="GO:0005615">
    <property type="term" value="C:extracellular space"/>
    <property type="evidence" value="ECO:0000250"/>
    <property type="project" value="UniProtKB"/>
</dbReference>
<dbReference type="GO" id="GO:0004000">
    <property type="term" value="F:adenosine deaminase activity"/>
    <property type="evidence" value="ECO:0000250"/>
    <property type="project" value="UniProtKB"/>
</dbReference>
<dbReference type="GO" id="GO:0031685">
    <property type="term" value="F:adenosine receptor binding"/>
    <property type="evidence" value="ECO:0000250"/>
    <property type="project" value="UniProtKB"/>
</dbReference>
<dbReference type="GO" id="GO:0008201">
    <property type="term" value="F:heparin binding"/>
    <property type="evidence" value="ECO:0007669"/>
    <property type="project" value="UniProtKB-KW"/>
</dbReference>
<dbReference type="GO" id="GO:0043394">
    <property type="term" value="F:proteoglycan binding"/>
    <property type="evidence" value="ECO:0000250"/>
    <property type="project" value="UniProtKB"/>
</dbReference>
<dbReference type="GO" id="GO:0008270">
    <property type="term" value="F:zinc ion binding"/>
    <property type="evidence" value="ECO:0000250"/>
    <property type="project" value="UniProtKB"/>
</dbReference>
<dbReference type="GO" id="GO:0006154">
    <property type="term" value="P:adenosine catabolic process"/>
    <property type="evidence" value="ECO:0000250"/>
    <property type="project" value="UniProtKB"/>
</dbReference>
<dbReference type="GO" id="GO:0046103">
    <property type="term" value="P:inosine biosynthetic process"/>
    <property type="evidence" value="ECO:0000318"/>
    <property type="project" value="GO_Central"/>
</dbReference>
<dbReference type="CDD" id="cd01321">
    <property type="entry name" value="ADGF"/>
    <property type="match status" value="1"/>
</dbReference>
<dbReference type="FunFam" id="3.20.20.140:FF:000017">
    <property type="entry name" value="Adenosine deaminase 2"/>
    <property type="match status" value="1"/>
</dbReference>
<dbReference type="Gene3D" id="3.20.20.140">
    <property type="entry name" value="Metal-dependent hydrolases"/>
    <property type="match status" value="1"/>
</dbReference>
<dbReference type="InterPro" id="IPR001365">
    <property type="entry name" value="A_deaminase_dom"/>
</dbReference>
<dbReference type="InterPro" id="IPR013659">
    <property type="entry name" value="A_deaminase_N"/>
</dbReference>
<dbReference type="InterPro" id="IPR006331">
    <property type="entry name" value="ADGF"/>
</dbReference>
<dbReference type="InterPro" id="IPR006330">
    <property type="entry name" value="Ado/ade_deaminase"/>
</dbReference>
<dbReference type="InterPro" id="IPR032466">
    <property type="entry name" value="Metal_Hydrolase"/>
</dbReference>
<dbReference type="NCBIfam" id="TIGR01431">
    <property type="entry name" value="adm_rel"/>
    <property type="match status" value="1"/>
</dbReference>
<dbReference type="PANTHER" id="PTHR11409">
    <property type="entry name" value="ADENOSINE DEAMINASE"/>
    <property type="match status" value="1"/>
</dbReference>
<dbReference type="PANTHER" id="PTHR11409:SF39">
    <property type="entry name" value="ADENOSINE DEAMINASE 2"/>
    <property type="match status" value="1"/>
</dbReference>
<dbReference type="Pfam" id="PF00962">
    <property type="entry name" value="A_deaminase"/>
    <property type="match status" value="1"/>
</dbReference>
<dbReference type="Pfam" id="PF08451">
    <property type="entry name" value="A_deaminase_N"/>
    <property type="match status" value="1"/>
</dbReference>
<dbReference type="SUPFAM" id="SSF51556">
    <property type="entry name" value="Metallo-dependent hydrolases"/>
    <property type="match status" value="1"/>
</dbReference>
<evidence type="ECO:0000250" key="1"/>
<evidence type="ECO:0000250" key="2">
    <source>
        <dbReference type="UniProtKB" id="Q9NZK5"/>
    </source>
</evidence>
<evidence type="ECO:0000255" key="3"/>
<evidence type="ECO:0000305" key="4"/>
<accession>P58780</accession>
<accession>Q8WND6</accession>
<protein>
    <recommendedName>
        <fullName evidence="2">Adenosine deaminase 2</fullName>
        <ecNumber evidence="2">3.5.4.4</ecNumber>
    </recommendedName>
    <alternativeName>
        <fullName>Cat eye syndrome critical region protein 1</fullName>
    </alternativeName>
</protein>
<reference key="1">
    <citation type="journal article" date="2001" name="Gene">
        <title>Characterization of the adenosine deaminase-related growth factor (ADGF) gene family in Drosophila.</title>
        <authorList>
            <person name="Maier S.A."/>
            <person name="Podemski L."/>
            <person name="Graham S.W."/>
            <person name="McDermid H.E."/>
            <person name="Locke J."/>
        </authorList>
    </citation>
    <scope>NUCLEOTIDE SEQUENCE [MRNA]</scope>
</reference>
<feature type="signal peptide" evidence="3">
    <location>
        <begin position="1"/>
        <end position="24"/>
    </location>
</feature>
<feature type="chain" id="PRO_0000006726" description="Adenosine deaminase 2">
    <location>
        <begin position="25"/>
        <end position="510"/>
    </location>
</feature>
<feature type="region of interest" description="Dimerization" evidence="1">
    <location>
        <begin position="25"/>
        <end position="95"/>
    </location>
</feature>
<feature type="region of interest" description="PRB domain" evidence="1">
    <location>
        <begin position="122"/>
        <end position="182"/>
    </location>
</feature>
<feature type="active site" description="Proton donor" evidence="1">
    <location>
        <position position="356"/>
    </location>
</feature>
<feature type="active site" description="Proton acceptor" evidence="1">
    <location>
        <position position="381"/>
    </location>
</feature>
<feature type="binding site" evidence="1">
    <location>
        <position position="107"/>
    </location>
    <ligand>
        <name>Zn(2+)</name>
        <dbReference type="ChEBI" id="CHEBI:29105"/>
        <note>catalytic</note>
    </ligand>
</feature>
<feature type="binding site" evidence="1">
    <location>
        <position position="109"/>
    </location>
    <ligand>
        <name>Zn(2+)</name>
        <dbReference type="ChEBI" id="CHEBI:29105"/>
        <note>catalytic</note>
    </ligand>
</feature>
<feature type="binding site" evidence="1">
    <location>
        <position position="110"/>
    </location>
    <ligand>
        <name>substrate</name>
    </ligand>
</feature>
<feature type="binding site" evidence="1">
    <location>
        <begin position="201"/>
        <end position="208"/>
    </location>
    <ligand>
        <name>substrate</name>
    </ligand>
</feature>
<feature type="binding site" evidence="1">
    <location>
        <position position="290"/>
    </location>
    <ligand>
        <name>substrate</name>
    </ligand>
</feature>
<feature type="binding site" evidence="1">
    <location>
        <position position="323"/>
    </location>
    <ligand>
        <name>substrate</name>
    </ligand>
</feature>
<feature type="binding site" evidence="1">
    <location>
        <position position="353"/>
    </location>
    <ligand>
        <name>Zn(2+)</name>
        <dbReference type="ChEBI" id="CHEBI:29105"/>
        <note>catalytic</note>
    </ligand>
</feature>
<feature type="binding site" evidence="1">
    <location>
        <position position="438"/>
    </location>
    <ligand>
        <name>Zn(2+)</name>
        <dbReference type="ChEBI" id="CHEBI:29105"/>
        <note>catalytic</note>
    </ligand>
</feature>
<feature type="binding site" evidence="1">
    <location>
        <position position="439"/>
    </location>
    <ligand>
        <name>substrate</name>
    </ligand>
</feature>
<feature type="glycosylation site" description="N-linked (GlcNAc...) asparagine" evidence="3">
    <location>
        <position position="122"/>
    </location>
</feature>
<feature type="glycosylation site" description="N-linked (GlcNAc...) asparagine" evidence="3">
    <location>
        <position position="171"/>
    </location>
</feature>
<feature type="glycosylation site" description="N-linked (GlcNAc...) asparagine" evidence="3">
    <location>
        <position position="375"/>
    </location>
</feature>
<feature type="disulfide bond" evidence="1">
    <location>
        <begin position="132"/>
        <end position="156"/>
    </location>
</feature>
<name>ADA2_PIG</name>